<evidence type="ECO:0000255" key="1">
    <source>
        <dbReference type="HAMAP-Rule" id="MF_00154"/>
    </source>
</evidence>
<accession>Q2GDE4</accession>
<feature type="chain" id="PRO_0000327095" description="Protoheme IX farnesyltransferase">
    <location>
        <begin position="1"/>
        <end position="302"/>
    </location>
</feature>
<feature type="transmembrane region" description="Helical" evidence="1">
    <location>
        <begin position="24"/>
        <end position="44"/>
    </location>
</feature>
<feature type="transmembrane region" description="Helical" evidence="1">
    <location>
        <begin position="48"/>
        <end position="68"/>
    </location>
</feature>
<feature type="transmembrane region" description="Helical" evidence="1">
    <location>
        <begin position="97"/>
        <end position="117"/>
    </location>
</feature>
<feature type="transmembrane region" description="Helical" evidence="1">
    <location>
        <begin position="120"/>
        <end position="140"/>
    </location>
</feature>
<feature type="transmembrane region" description="Helical" evidence="1">
    <location>
        <begin position="147"/>
        <end position="167"/>
    </location>
</feature>
<feature type="transmembrane region" description="Helical" evidence="1">
    <location>
        <begin position="174"/>
        <end position="194"/>
    </location>
</feature>
<feature type="transmembrane region" description="Helical" evidence="1">
    <location>
        <begin position="221"/>
        <end position="241"/>
    </location>
</feature>
<feature type="transmembrane region" description="Helical" evidence="1">
    <location>
        <begin position="245"/>
        <end position="265"/>
    </location>
</feature>
<feature type="transmembrane region" description="Helical" evidence="1">
    <location>
        <begin position="282"/>
        <end position="302"/>
    </location>
</feature>
<name>COXX_NEOSM</name>
<sequence length="302" mass="33219">MFQVVSKTDWLTVRAYFALLKPRVVSLVTFTAVTGAVLAYFSGYHAPFFSVFTAIFCIAVGSGAAGALNMYYDRDIDAIMSRTSKRPIPQGKISPEAALVFGLVLFALSVLLMELAVNHLSAVLLSVAVFYYSVIYTVYLKRRTPQNIVVGGGAGAFPPMIGWAAVANHIGVESLVLFLIIFLWTPPHFWALALKNSGEYEAAGIPMLPVTSGVKATKMQILCYSVLLFITSILPYLLRFSGGTYMIVAFILGLVFLYYAINVYLDEKKCMKLFYYSVLYLFLLFGVFILDAALSTALGMLI</sequence>
<keyword id="KW-0997">Cell inner membrane</keyword>
<keyword id="KW-1003">Cell membrane</keyword>
<keyword id="KW-0350">Heme biosynthesis</keyword>
<keyword id="KW-0472">Membrane</keyword>
<keyword id="KW-0808">Transferase</keyword>
<keyword id="KW-0812">Transmembrane</keyword>
<keyword id="KW-1133">Transmembrane helix</keyword>
<dbReference type="EC" id="2.5.1.141" evidence="1"/>
<dbReference type="EMBL" id="CP000237">
    <property type="protein sequence ID" value="ABD46005.1"/>
    <property type="molecule type" value="Genomic_DNA"/>
</dbReference>
<dbReference type="RefSeq" id="WP_011452008.1">
    <property type="nucleotide sequence ID" value="NC_007798.1"/>
</dbReference>
<dbReference type="SMR" id="Q2GDE4"/>
<dbReference type="STRING" id="222891.NSE_0623"/>
<dbReference type="KEGG" id="nse:NSE_0623"/>
<dbReference type="eggNOG" id="COG0109">
    <property type="taxonomic scope" value="Bacteria"/>
</dbReference>
<dbReference type="HOGENOM" id="CLU_029631_0_2_5"/>
<dbReference type="OrthoDB" id="9814417at2"/>
<dbReference type="UniPathway" id="UPA00834">
    <property type="reaction ID" value="UER00712"/>
</dbReference>
<dbReference type="Proteomes" id="UP000001942">
    <property type="component" value="Chromosome"/>
</dbReference>
<dbReference type="GO" id="GO:0005886">
    <property type="term" value="C:plasma membrane"/>
    <property type="evidence" value="ECO:0007669"/>
    <property type="project" value="UniProtKB-SubCell"/>
</dbReference>
<dbReference type="GO" id="GO:0008495">
    <property type="term" value="F:protoheme IX farnesyltransferase activity"/>
    <property type="evidence" value="ECO:0007669"/>
    <property type="project" value="UniProtKB-UniRule"/>
</dbReference>
<dbReference type="GO" id="GO:0048034">
    <property type="term" value="P:heme O biosynthetic process"/>
    <property type="evidence" value="ECO:0007669"/>
    <property type="project" value="UniProtKB-UniRule"/>
</dbReference>
<dbReference type="CDD" id="cd13957">
    <property type="entry name" value="PT_UbiA_Cox10"/>
    <property type="match status" value="1"/>
</dbReference>
<dbReference type="Gene3D" id="1.10.357.140">
    <property type="entry name" value="UbiA prenyltransferase"/>
    <property type="match status" value="1"/>
</dbReference>
<dbReference type="HAMAP" id="MF_00154">
    <property type="entry name" value="CyoE_CtaB"/>
    <property type="match status" value="1"/>
</dbReference>
<dbReference type="InterPro" id="IPR006369">
    <property type="entry name" value="Protohaem_IX_farnesylTrfase"/>
</dbReference>
<dbReference type="InterPro" id="IPR000537">
    <property type="entry name" value="UbiA_prenyltransferase"/>
</dbReference>
<dbReference type="InterPro" id="IPR030470">
    <property type="entry name" value="UbiA_prenylTrfase_CS"/>
</dbReference>
<dbReference type="InterPro" id="IPR044878">
    <property type="entry name" value="UbiA_sf"/>
</dbReference>
<dbReference type="NCBIfam" id="TIGR01473">
    <property type="entry name" value="cyoE_ctaB"/>
    <property type="match status" value="1"/>
</dbReference>
<dbReference type="NCBIfam" id="NF003349">
    <property type="entry name" value="PRK04375.1-2"/>
    <property type="match status" value="1"/>
</dbReference>
<dbReference type="PANTHER" id="PTHR43448:SF7">
    <property type="entry name" value="4-HYDROXYBENZOATE SOLANESYLTRANSFERASE"/>
    <property type="match status" value="1"/>
</dbReference>
<dbReference type="PANTHER" id="PTHR43448">
    <property type="entry name" value="PROTOHEME IX FARNESYLTRANSFERASE, MITOCHONDRIAL"/>
    <property type="match status" value="1"/>
</dbReference>
<dbReference type="Pfam" id="PF01040">
    <property type="entry name" value="UbiA"/>
    <property type="match status" value="1"/>
</dbReference>
<dbReference type="PROSITE" id="PS00943">
    <property type="entry name" value="UBIA"/>
    <property type="match status" value="1"/>
</dbReference>
<proteinExistence type="inferred from homology"/>
<protein>
    <recommendedName>
        <fullName evidence="1">Protoheme IX farnesyltransferase</fullName>
        <ecNumber evidence="1">2.5.1.141</ecNumber>
    </recommendedName>
    <alternativeName>
        <fullName evidence="1">Heme B farnesyltransferase</fullName>
    </alternativeName>
    <alternativeName>
        <fullName evidence="1">Heme O synthase</fullName>
    </alternativeName>
</protein>
<comment type="function">
    <text evidence="1">Converts heme B (protoheme IX) to heme O by substitution of the vinyl group on carbon 2 of heme B porphyrin ring with a hydroxyethyl farnesyl side group.</text>
</comment>
<comment type="catalytic activity">
    <reaction evidence="1">
        <text>heme b + (2E,6E)-farnesyl diphosphate + H2O = Fe(II)-heme o + diphosphate</text>
        <dbReference type="Rhea" id="RHEA:28070"/>
        <dbReference type="ChEBI" id="CHEBI:15377"/>
        <dbReference type="ChEBI" id="CHEBI:33019"/>
        <dbReference type="ChEBI" id="CHEBI:60344"/>
        <dbReference type="ChEBI" id="CHEBI:60530"/>
        <dbReference type="ChEBI" id="CHEBI:175763"/>
        <dbReference type="EC" id="2.5.1.141"/>
    </reaction>
</comment>
<comment type="pathway">
    <text evidence="1">Porphyrin-containing compound metabolism; heme O biosynthesis; heme O from protoheme: step 1/1.</text>
</comment>
<comment type="subcellular location">
    <subcellularLocation>
        <location evidence="1">Cell inner membrane</location>
        <topology evidence="1">Multi-pass membrane protein</topology>
    </subcellularLocation>
</comment>
<comment type="miscellaneous">
    <text evidence="1">Carbon 2 of the heme B porphyrin ring is defined according to the Fischer nomenclature.</text>
</comment>
<comment type="similarity">
    <text evidence="1">Belongs to the UbiA prenyltransferase family. Protoheme IX farnesyltransferase subfamily.</text>
</comment>
<organism>
    <name type="scientific">Neorickettsia sennetsu (strain ATCC VR-367 / Miyayama)</name>
    <name type="common">Ehrlichia sennetsu</name>
    <dbReference type="NCBI Taxonomy" id="222891"/>
    <lineage>
        <taxon>Bacteria</taxon>
        <taxon>Pseudomonadati</taxon>
        <taxon>Pseudomonadota</taxon>
        <taxon>Alphaproteobacteria</taxon>
        <taxon>Rickettsiales</taxon>
        <taxon>Anaplasmataceae</taxon>
        <taxon>Neorickettsia</taxon>
    </lineage>
</organism>
<reference key="1">
    <citation type="journal article" date="2006" name="PLoS Genet.">
        <title>Comparative genomics of emerging human ehrlichiosis agents.</title>
        <authorList>
            <person name="Dunning Hotopp J.C."/>
            <person name="Lin M."/>
            <person name="Madupu R."/>
            <person name="Crabtree J."/>
            <person name="Angiuoli S.V."/>
            <person name="Eisen J.A."/>
            <person name="Seshadri R."/>
            <person name="Ren Q."/>
            <person name="Wu M."/>
            <person name="Utterback T.R."/>
            <person name="Smith S."/>
            <person name="Lewis M."/>
            <person name="Khouri H."/>
            <person name="Zhang C."/>
            <person name="Niu H."/>
            <person name="Lin Q."/>
            <person name="Ohashi N."/>
            <person name="Zhi N."/>
            <person name="Nelson W.C."/>
            <person name="Brinkac L.M."/>
            <person name="Dodson R.J."/>
            <person name="Rosovitz M.J."/>
            <person name="Sundaram J.P."/>
            <person name="Daugherty S.C."/>
            <person name="Davidsen T."/>
            <person name="Durkin A.S."/>
            <person name="Gwinn M.L."/>
            <person name="Haft D.H."/>
            <person name="Selengut J.D."/>
            <person name="Sullivan S.A."/>
            <person name="Zafar N."/>
            <person name="Zhou L."/>
            <person name="Benahmed F."/>
            <person name="Forberger H."/>
            <person name="Halpin R."/>
            <person name="Mulligan S."/>
            <person name="Robinson J."/>
            <person name="White O."/>
            <person name="Rikihisa Y."/>
            <person name="Tettelin H."/>
        </authorList>
    </citation>
    <scope>NUCLEOTIDE SEQUENCE [LARGE SCALE GENOMIC DNA]</scope>
    <source>
        <strain>ATCC VR-367 / Miyayama</strain>
    </source>
</reference>
<gene>
    <name evidence="1" type="primary">ctaB</name>
    <name type="ordered locus">NSE_0623</name>
</gene>